<accession>P9WH04</accession>
<accession>L0T8U3</accession>
<accession>Q11039</accession>
<reference key="1">
    <citation type="journal article" date="2002" name="J. Bacteriol.">
        <title>Whole-genome comparison of Mycobacterium tuberculosis clinical and laboratory strains.</title>
        <authorList>
            <person name="Fleischmann R.D."/>
            <person name="Alland D."/>
            <person name="Eisen J.A."/>
            <person name="Carpenter L."/>
            <person name="White O."/>
            <person name="Peterson J.D."/>
            <person name="DeBoy R.T."/>
            <person name="Dodson R.J."/>
            <person name="Gwinn M.L."/>
            <person name="Haft D.H."/>
            <person name="Hickey E.K."/>
            <person name="Kolonay J.F."/>
            <person name="Nelson W.C."/>
            <person name="Umayam L.A."/>
            <person name="Ermolaeva M.D."/>
            <person name="Salzberg S.L."/>
            <person name="Delcher A."/>
            <person name="Utterback T.R."/>
            <person name="Weidman J.F."/>
            <person name="Khouri H.M."/>
            <person name="Gill J."/>
            <person name="Mikula A."/>
            <person name="Bishai W."/>
            <person name="Jacobs W.R. Jr."/>
            <person name="Venter J.C."/>
            <person name="Fraser C.M."/>
        </authorList>
    </citation>
    <scope>NUCLEOTIDE SEQUENCE [LARGE SCALE GENOMIC DNA]</scope>
    <source>
        <strain>CDC 1551 / Oshkosh</strain>
    </source>
</reference>
<name>DEAD_MYCTO</name>
<protein>
    <recommendedName>
        <fullName evidence="1">ATP-dependent RNA helicase DeaD</fullName>
        <ecNumber evidence="1">3.6.4.13</ecNumber>
    </recommendedName>
    <alternativeName>
        <fullName evidence="1">Cold-shock DEAD box protein A</fullName>
    </alternativeName>
</protein>
<organism>
    <name type="scientific">Mycobacterium tuberculosis (strain CDC 1551 / Oshkosh)</name>
    <dbReference type="NCBI Taxonomy" id="83331"/>
    <lineage>
        <taxon>Bacteria</taxon>
        <taxon>Bacillati</taxon>
        <taxon>Actinomycetota</taxon>
        <taxon>Actinomycetes</taxon>
        <taxon>Mycobacteriales</taxon>
        <taxon>Mycobacteriaceae</taxon>
        <taxon>Mycobacterium</taxon>
        <taxon>Mycobacterium tuberculosis complex</taxon>
    </lineage>
</organism>
<keyword id="KW-0067">ATP-binding</keyword>
<keyword id="KW-0963">Cytoplasm</keyword>
<keyword id="KW-0347">Helicase</keyword>
<keyword id="KW-0378">Hydrolase</keyword>
<keyword id="KW-0547">Nucleotide-binding</keyword>
<keyword id="KW-1185">Reference proteome</keyword>
<keyword id="KW-0694">RNA-binding</keyword>
<keyword id="KW-0346">Stress response</keyword>
<evidence type="ECO:0000255" key="1">
    <source>
        <dbReference type="HAMAP-Rule" id="MF_00964"/>
    </source>
</evidence>
<evidence type="ECO:0000256" key="2">
    <source>
        <dbReference type="SAM" id="MobiDB-lite"/>
    </source>
</evidence>
<proteinExistence type="inferred from homology"/>
<dbReference type="EC" id="3.6.4.13" evidence="1"/>
<dbReference type="EMBL" id="AE000516">
    <property type="protein sequence ID" value="AAK45550.1"/>
    <property type="molecule type" value="Genomic_DNA"/>
</dbReference>
<dbReference type="PIR" id="E70752">
    <property type="entry name" value="E70752"/>
</dbReference>
<dbReference type="RefSeq" id="WP_003898793.1">
    <property type="nucleotide sequence ID" value="NZ_KK341227.1"/>
</dbReference>
<dbReference type="SMR" id="P9WH04"/>
<dbReference type="KEGG" id="mtc:MT1292"/>
<dbReference type="PATRIC" id="fig|83331.31.peg.1395"/>
<dbReference type="HOGENOM" id="CLU_003041_21_1_11"/>
<dbReference type="Proteomes" id="UP000001020">
    <property type="component" value="Chromosome"/>
</dbReference>
<dbReference type="GO" id="GO:0005829">
    <property type="term" value="C:cytosol"/>
    <property type="evidence" value="ECO:0007669"/>
    <property type="project" value="TreeGrafter"/>
</dbReference>
<dbReference type="GO" id="GO:0005840">
    <property type="term" value="C:ribosome"/>
    <property type="evidence" value="ECO:0007669"/>
    <property type="project" value="TreeGrafter"/>
</dbReference>
<dbReference type="GO" id="GO:0005524">
    <property type="term" value="F:ATP binding"/>
    <property type="evidence" value="ECO:0007669"/>
    <property type="project" value="UniProtKB-UniRule"/>
</dbReference>
<dbReference type="GO" id="GO:0016887">
    <property type="term" value="F:ATP hydrolysis activity"/>
    <property type="evidence" value="ECO:0007669"/>
    <property type="project" value="RHEA"/>
</dbReference>
<dbReference type="GO" id="GO:0003724">
    <property type="term" value="F:RNA helicase activity"/>
    <property type="evidence" value="ECO:0007669"/>
    <property type="project" value="UniProtKB-UniRule"/>
</dbReference>
<dbReference type="GO" id="GO:0033592">
    <property type="term" value="F:RNA strand annealing activity"/>
    <property type="evidence" value="ECO:0007669"/>
    <property type="project" value="TreeGrafter"/>
</dbReference>
<dbReference type="GO" id="GO:0070417">
    <property type="term" value="P:cellular response to cold"/>
    <property type="evidence" value="ECO:0007669"/>
    <property type="project" value="InterPro"/>
</dbReference>
<dbReference type="GO" id="GO:0000027">
    <property type="term" value="P:ribosomal large subunit assembly"/>
    <property type="evidence" value="ECO:0007669"/>
    <property type="project" value="UniProtKB-UniRule"/>
</dbReference>
<dbReference type="GO" id="GO:0006401">
    <property type="term" value="P:RNA catabolic process"/>
    <property type="evidence" value="ECO:0007669"/>
    <property type="project" value="UniProtKB-UniRule"/>
</dbReference>
<dbReference type="CDD" id="cd00268">
    <property type="entry name" value="DEADc"/>
    <property type="match status" value="1"/>
</dbReference>
<dbReference type="CDD" id="cd18787">
    <property type="entry name" value="SF2_C_DEAD"/>
    <property type="match status" value="1"/>
</dbReference>
<dbReference type="FunFam" id="3.40.50.300:FF:000108">
    <property type="entry name" value="ATP-dependent RNA helicase RhlE"/>
    <property type="match status" value="1"/>
</dbReference>
<dbReference type="Gene3D" id="3.30.70.330">
    <property type="match status" value="1"/>
</dbReference>
<dbReference type="Gene3D" id="3.40.50.300">
    <property type="entry name" value="P-loop containing nucleotide triphosphate hydrolases"/>
    <property type="match status" value="2"/>
</dbReference>
<dbReference type="HAMAP" id="MF_00964">
    <property type="entry name" value="DEAD_helicase_DeaD"/>
    <property type="match status" value="1"/>
</dbReference>
<dbReference type="InterPro" id="IPR005580">
    <property type="entry name" value="DbpA/CsdA_RNA-bd_dom"/>
</dbReference>
<dbReference type="InterPro" id="IPR011545">
    <property type="entry name" value="DEAD/DEAH_box_helicase_dom"/>
</dbReference>
<dbReference type="InterPro" id="IPR050547">
    <property type="entry name" value="DEAD_box_RNA_helicases"/>
</dbReference>
<dbReference type="InterPro" id="IPR028618">
    <property type="entry name" value="DEAD_helicase_DeaD"/>
</dbReference>
<dbReference type="InterPro" id="IPR014001">
    <property type="entry name" value="Helicase_ATP-bd"/>
</dbReference>
<dbReference type="InterPro" id="IPR001650">
    <property type="entry name" value="Helicase_C-like"/>
</dbReference>
<dbReference type="InterPro" id="IPR012677">
    <property type="entry name" value="Nucleotide-bd_a/b_plait_sf"/>
</dbReference>
<dbReference type="InterPro" id="IPR027417">
    <property type="entry name" value="P-loop_NTPase"/>
</dbReference>
<dbReference type="InterPro" id="IPR000629">
    <property type="entry name" value="RNA-helicase_DEAD-box_CS"/>
</dbReference>
<dbReference type="InterPro" id="IPR014014">
    <property type="entry name" value="RNA_helicase_DEAD_Q_motif"/>
</dbReference>
<dbReference type="PANTHER" id="PTHR47963:SF8">
    <property type="entry name" value="ATP-DEPENDENT RNA HELICASE DEAD"/>
    <property type="match status" value="1"/>
</dbReference>
<dbReference type="PANTHER" id="PTHR47963">
    <property type="entry name" value="DEAD-BOX ATP-DEPENDENT RNA HELICASE 47, MITOCHONDRIAL"/>
    <property type="match status" value="1"/>
</dbReference>
<dbReference type="Pfam" id="PF03880">
    <property type="entry name" value="DbpA"/>
    <property type="match status" value="1"/>
</dbReference>
<dbReference type="Pfam" id="PF00270">
    <property type="entry name" value="DEAD"/>
    <property type="match status" value="1"/>
</dbReference>
<dbReference type="Pfam" id="PF25399">
    <property type="entry name" value="DeaD_dimer"/>
    <property type="match status" value="1"/>
</dbReference>
<dbReference type="Pfam" id="PF00271">
    <property type="entry name" value="Helicase_C"/>
    <property type="match status" value="1"/>
</dbReference>
<dbReference type="SMART" id="SM00487">
    <property type="entry name" value="DEXDc"/>
    <property type="match status" value="1"/>
</dbReference>
<dbReference type="SMART" id="SM00490">
    <property type="entry name" value="HELICc"/>
    <property type="match status" value="1"/>
</dbReference>
<dbReference type="SUPFAM" id="SSF52540">
    <property type="entry name" value="P-loop containing nucleoside triphosphate hydrolases"/>
    <property type="match status" value="1"/>
</dbReference>
<dbReference type="PROSITE" id="PS00039">
    <property type="entry name" value="DEAD_ATP_HELICASE"/>
    <property type="match status" value="1"/>
</dbReference>
<dbReference type="PROSITE" id="PS51192">
    <property type="entry name" value="HELICASE_ATP_BIND_1"/>
    <property type="match status" value="1"/>
</dbReference>
<dbReference type="PROSITE" id="PS51194">
    <property type="entry name" value="HELICASE_CTER"/>
    <property type="match status" value="1"/>
</dbReference>
<dbReference type="PROSITE" id="PS51195">
    <property type="entry name" value="Q_MOTIF"/>
    <property type="match status" value="1"/>
</dbReference>
<feature type="chain" id="PRO_0000428271" description="ATP-dependent RNA helicase DeaD">
    <location>
        <begin position="1"/>
        <end position="563"/>
    </location>
</feature>
<feature type="domain" description="Helicase ATP-binding" evidence="1">
    <location>
        <begin position="44"/>
        <end position="215"/>
    </location>
</feature>
<feature type="domain" description="Helicase C-terminal" evidence="1">
    <location>
        <begin position="226"/>
        <end position="385"/>
    </location>
</feature>
<feature type="region of interest" description="Disordered" evidence="2">
    <location>
        <begin position="441"/>
        <end position="470"/>
    </location>
</feature>
<feature type="region of interest" description="Disordered" evidence="2">
    <location>
        <begin position="543"/>
        <end position="563"/>
    </location>
</feature>
<feature type="short sequence motif" description="Q motif">
    <location>
        <begin position="13"/>
        <end position="41"/>
    </location>
</feature>
<feature type="short sequence motif" description="DEAD box">
    <location>
        <begin position="163"/>
        <end position="166"/>
    </location>
</feature>
<feature type="compositionally biased region" description="Basic and acidic residues" evidence="2">
    <location>
        <begin position="451"/>
        <end position="461"/>
    </location>
</feature>
<feature type="compositionally biased region" description="Basic residues" evidence="2">
    <location>
        <begin position="551"/>
        <end position="563"/>
    </location>
</feature>
<feature type="binding site" evidence="1">
    <location>
        <begin position="57"/>
        <end position="64"/>
    </location>
    <ligand>
        <name>ATP</name>
        <dbReference type="ChEBI" id="CHEBI:30616"/>
    </ligand>
</feature>
<comment type="function">
    <text evidence="1">DEAD-box RNA helicase involved in various cellular processes at low temperature, including ribosome biogenesis, mRNA degradation and translation initiation.</text>
</comment>
<comment type="catalytic activity">
    <reaction evidence="1">
        <text>ATP + H2O = ADP + phosphate + H(+)</text>
        <dbReference type="Rhea" id="RHEA:13065"/>
        <dbReference type="ChEBI" id="CHEBI:15377"/>
        <dbReference type="ChEBI" id="CHEBI:15378"/>
        <dbReference type="ChEBI" id="CHEBI:30616"/>
        <dbReference type="ChEBI" id="CHEBI:43474"/>
        <dbReference type="ChEBI" id="CHEBI:456216"/>
        <dbReference type="EC" id="3.6.4.13"/>
    </reaction>
</comment>
<comment type="subcellular location">
    <subcellularLocation>
        <location evidence="1">Cytoplasm</location>
    </subcellularLocation>
</comment>
<comment type="similarity">
    <text evidence="1">Belongs to the DEAD box helicase family. DeaD/CsdA subfamily.</text>
</comment>
<sequence length="563" mass="61453">MAFPEYSPAASAATFADLQIHPRVLRAIGDVGYESPTAIQAATIPALMAGSDVVGLAQTGTGKTAAFAIPMLSKIDITSKVPQALVLVPTRELALQVAEAFGRYGAYLSQLNVLPIYGGSSYAVQLAGLRRGAQVVVGTPGRMIDHLERATLDLSRVDFLVLDEADEMLTMGFADDVERILSETPEYKQVALFSATMPPAIRKLSAKYLHDPFEVTCKAKTAVAENISQSYIQVARKMDALTRVLEVEPFEAMIVFVRTKQATEEIAEKLRARGFSAAAISGDVPQAQRERTITALRDGDIDILVATDVAARGLDVERISHVLNYDIPHDTESYVHRIGRTGRAGRSGAALIFVSPRELHLLKAIEKATRQTLTEAQLPTVEDVNTQRVAKFADSITNALGGPGIELFRRLVEEYEREHDVPMADIAAALAVQCRGGEAFLMAPDPPLSRRNRDQRRDRPQRPKRRPDLTTYRVAVGKRHKIGPGAIVGAIANEGGLHRSDFGQIRIGPDFSLVELPAKLPRATLKKLAQTRISGVLIDLRPYRPPDAARRHNGGKPRRKHVG</sequence>
<gene>
    <name evidence="1" type="primary">deaD</name>
    <name evidence="1" type="synonym">csdA</name>
    <name type="ordered locus">MT1292</name>
</gene>